<feature type="signal peptide" evidence="2">
    <location>
        <begin position="1"/>
        <end position="18"/>
    </location>
</feature>
<feature type="chain" id="PRO_0000006286" description="Cysteine-rich venom protein tigrin">
    <location>
        <begin position="19"/>
        <end position="237"/>
    </location>
</feature>
<feature type="domain" description="SCP">
    <location>
        <begin position="37"/>
        <end position="165"/>
    </location>
</feature>
<feature type="domain" description="ShKT" evidence="1">
    <location>
        <begin position="201"/>
        <end position="232"/>
    </location>
</feature>
<feature type="disulfide bond" evidence="1">
    <location>
        <begin position="74"/>
        <end position="152"/>
    </location>
</feature>
<feature type="disulfide bond" evidence="1">
    <location>
        <begin position="91"/>
        <end position="166"/>
    </location>
</feature>
<feature type="disulfide bond" evidence="1">
    <location>
        <begin position="147"/>
        <end position="163"/>
    </location>
</feature>
<feature type="disulfide bond" evidence="1">
    <location>
        <begin position="185"/>
        <end position="192"/>
    </location>
</feature>
<feature type="disulfide bond" evidence="1">
    <location>
        <begin position="188"/>
        <end position="197"/>
    </location>
</feature>
<feature type="disulfide bond" evidence="1">
    <location>
        <begin position="201"/>
        <end position="232"/>
    </location>
</feature>
<feature type="disulfide bond" evidence="1">
    <location>
        <begin position="210"/>
        <end position="226"/>
    </location>
</feature>
<feature type="disulfide bond" evidence="1">
    <location>
        <begin position="217"/>
        <end position="230"/>
    </location>
</feature>
<feature type="sequence conflict" description="In Ref. 2; AAZ75605." evidence="3" ref="2">
    <original>S</original>
    <variation>G</variation>
    <location>
        <position position="106"/>
    </location>
</feature>
<organism>
    <name type="scientific">Rhabdophis tigrinus tigrinus</name>
    <name type="common">Tiger keelback snake</name>
    <dbReference type="NCBI Taxonomy" id="193080"/>
    <lineage>
        <taxon>Eukaryota</taxon>
        <taxon>Metazoa</taxon>
        <taxon>Chordata</taxon>
        <taxon>Craniata</taxon>
        <taxon>Vertebrata</taxon>
        <taxon>Euteleostomi</taxon>
        <taxon>Lepidosauria</taxon>
        <taxon>Squamata</taxon>
        <taxon>Bifurcata</taxon>
        <taxon>Unidentata</taxon>
        <taxon>Episquamata</taxon>
        <taxon>Toxicofera</taxon>
        <taxon>Serpentes</taxon>
        <taxon>Colubroidea</taxon>
        <taxon>Colubridae</taxon>
        <taxon>Natricinae</taxon>
        <taxon>Rhabdophis</taxon>
    </lineage>
</organism>
<keyword id="KW-0903">Direct protein sequencing</keyword>
<keyword id="KW-1015">Disulfide bond</keyword>
<keyword id="KW-0964">Secreted</keyword>
<keyword id="KW-0732">Signal</keyword>
<protein>
    <recommendedName>
        <fullName>Cysteine-rich venom protein tigrin</fullName>
        <shortName>CRVP</shortName>
    </recommendedName>
    <alternativeName>
        <fullName>Cysteine-rich secretory protein RHA1</fullName>
        <shortName>CRISP-RHA1</shortName>
    </alternativeName>
</protein>
<comment type="function">
    <text evidence="2">This protein does not inhibit smooth muscle contraction elicited by high potassium levels or caffeine.</text>
</comment>
<comment type="subcellular location">
    <subcellularLocation>
        <location>Secreted</location>
    </subcellularLocation>
</comment>
<comment type="tissue specificity">
    <text>Expressed by the venom gland.</text>
</comment>
<comment type="similarity">
    <text evidence="3">Belongs to the CRISP family.</text>
</comment>
<accession>Q8JGT9</accession>
<accession>Q2XXP6</accession>
<evidence type="ECO:0000255" key="1">
    <source>
        <dbReference type="PROSITE-ProRule" id="PRU01005"/>
    </source>
</evidence>
<evidence type="ECO:0000269" key="2">
    <source>
    </source>
</evidence>
<evidence type="ECO:0000305" key="3"/>
<reference key="1">
    <citation type="journal article" date="2002" name="Eur. J. Biochem.">
        <title>Cloning and characterization of novel snake venom proteins that block smooth muscle contraction.</title>
        <authorList>
            <person name="Yamazaki Y."/>
            <person name="Koike H."/>
            <person name="Sugiyama Y."/>
            <person name="Motoyoshi K."/>
            <person name="Wada T."/>
            <person name="Hishinuma S."/>
            <person name="Mita M."/>
            <person name="Morita T."/>
        </authorList>
    </citation>
    <scope>NUCLEOTIDE SEQUENCE [MRNA]</scope>
    <scope>PROTEIN SEQUENCE OF 19-56; 142-157; 161-171; 205-218; 220-221 AND 223-235</scope>
    <scope>FUNCTION</scope>
    <source>
        <tissue>Venom</tissue>
        <tissue>Venom gland</tissue>
    </source>
</reference>
<reference key="2">
    <citation type="journal article" date="2006" name="Nature">
        <title>Early evolution of the venom system in lizards and snakes.</title>
        <authorList>
            <person name="Fry B.G."/>
            <person name="Vidal N."/>
            <person name="Norman J.A."/>
            <person name="Vonk F.J."/>
            <person name="Scheib H."/>
            <person name="Ramjan S.F.R."/>
            <person name="Kuruppu S."/>
            <person name="Fung K."/>
            <person name="Blair Hedges S."/>
            <person name="Richardson M.K."/>
            <person name="Hodgson W.C."/>
            <person name="Ignjatovic V."/>
            <person name="Summerhayes R."/>
            <person name="Kochva E."/>
        </authorList>
    </citation>
    <scope>NUCLEOTIDE SEQUENCE [LARGE SCALE MRNA]</scope>
    <source>
        <tissue>Venom gland</tissue>
    </source>
</reference>
<proteinExistence type="evidence at protein level"/>
<dbReference type="EMBL" id="AY093955">
    <property type="protein sequence ID" value="AAM19739.1"/>
    <property type="molecule type" value="mRNA"/>
</dbReference>
<dbReference type="EMBL" id="DQ139899">
    <property type="protein sequence ID" value="AAZ75605.1"/>
    <property type="molecule type" value="mRNA"/>
</dbReference>
<dbReference type="SMR" id="Q8JGT9"/>
<dbReference type="GO" id="GO:0005576">
    <property type="term" value="C:extracellular region"/>
    <property type="evidence" value="ECO:0007669"/>
    <property type="project" value="UniProtKB-SubCell"/>
</dbReference>
<dbReference type="CDD" id="cd05383">
    <property type="entry name" value="CAP_CRISP"/>
    <property type="match status" value="1"/>
</dbReference>
<dbReference type="FunFam" id="3.40.33.10:FF:000005">
    <property type="entry name" value="Cysteine-rich secretory protein 2"/>
    <property type="match status" value="1"/>
</dbReference>
<dbReference type="Gene3D" id="3.40.33.10">
    <property type="entry name" value="CAP"/>
    <property type="match status" value="1"/>
</dbReference>
<dbReference type="Gene3D" id="1.10.10.740">
    <property type="entry name" value="Crisp domain"/>
    <property type="match status" value="1"/>
</dbReference>
<dbReference type="InterPro" id="IPR018244">
    <property type="entry name" value="Allrgn_V5/Tpx1_CS"/>
</dbReference>
<dbReference type="InterPro" id="IPR014044">
    <property type="entry name" value="CAP_dom"/>
</dbReference>
<dbReference type="InterPro" id="IPR035940">
    <property type="entry name" value="CAP_sf"/>
</dbReference>
<dbReference type="InterPro" id="IPR042076">
    <property type="entry name" value="Crisp-like_dom"/>
</dbReference>
<dbReference type="InterPro" id="IPR001283">
    <property type="entry name" value="CRISP-related"/>
</dbReference>
<dbReference type="InterPro" id="IPR013871">
    <property type="entry name" value="Cysteine_rich_secretory"/>
</dbReference>
<dbReference type="InterPro" id="IPR034117">
    <property type="entry name" value="SCP_CRISP"/>
</dbReference>
<dbReference type="InterPro" id="IPR003582">
    <property type="entry name" value="ShKT_dom"/>
</dbReference>
<dbReference type="PANTHER" id="PTHR10334">
    <property type="entry name" value="CYSTEINE-RICH SECRETORY PROTEIN-RELATED"/>
    <property type="match status" value="1"/>
</dbReference>
<dbReference type="Pfam" id="PF00188">
    <property type="entry name" value="CAP"/>
    <property type="match status" value="1"/>
</dbReference>
<dbReference type="Pfam" id="PF08562">
    <property type="entry name" value="Crisp"/>
    <property type="match status" value="1"/>
</dbReference>
<dbReference type="PRINTS" id="PR00837">
    <property type="entry name" value="V5TPXLIKE"/>
</dbReference>
<dbReference type="SMART" id="SM00198">
    <property type="entry name" value="SCP"/>
    <property type="match status" value="1"/>
</dbReference>
<dbReference type="SUPFAM" id="SSF57546">
    <property type="entry name" value="Crisp domain-like"/>
    <property type="match status" value="1"/>
</dbReference>
<dbReference type="SUPFAM" id="SSF55797">
    <property type="entry name" value="PR-1-like"/>
    <property type="match status" value="1"/>
</dbReference>
<dbReference type="PROSITE" id="PS01009">
    <property type="entry name" value="CRISP_1"/>
    <property type="match status" value="1"/>
</dbReference>
<dbReference type="PROSITE" id="PS01010">
    <property type="entry name" value="CRISP_2"/>
    <property type="match status" value="1"/>
</dbReference>
<dbReference type="PROSITE" id="PS51670">
    <property type="entry name" value="SHKT"/>
    <property type="match status" value="1"/>
</dbReference>
<sequence>MIVFILLSLAAVLRQSFGNVDFNSESPRNPGKQQEIVNIHNSFRRSVRPTARNMLKMEWYSEAASNAERWAYQCAYDHSPRSSRILNGIQCGENIFMASDPWAWTSIIQDWYDEYRNFVYGVGANPPDSVTGHYTQIVWYKSYLVGCAAAYCPSSLYNYFYVCQYCPAGNIQGSTSTPYASGPTCADCPSNCDNGLCTNPCTHKDDYNNCNSLVSDCQSDWDKSHCPATCFCKNKII</sequence>
<name>CRVP_RHATT</name>